<accession>Q2IG55</accession>
<keyword id="KW-0067">ATP-binding</keyword>
<keyword id="KW-0436">Ligase</keyword>
<keyword id="KW-0479">Metal-binding</keyword>
<keyword id="KW-0547">Nucleotide-binding</keyword>
<keyword id="KW-0671">Queuosine biosynthesis</keyword>
<keyword id="KW-1185">Reference proteome</keyword>
<keyword id="KW-0862">Zinc</keyword>
<name>QUEC_ANADE</name>
<feature type="chain" id="PRO_0000246791" description="7-cyano-7-deazaguanine synthase">
    <location>
        <begin position="1"/>
        <end position="234"/>
    </location>
</feature>
<feature type="binding site" evidence="1">
    <location>
        <begin position="15"/>
        <end position="25"/>
    </location>
    <ligand>
        <name>ATP</name>
        <dbReference type="ChEBI" id="CHEBI:30616"/>
    </ligand>
</feature>
<feature type="binding site" evidence="1">
    <location>
        <position position="199"/>
    </location>
    <ligand>
        <name>Zn(2+)</name>
        <dbReference type="ChEBI" id="CHEBI:29105"/>
    </ligand>
</feature>
<feature type="binding site" evidence="1">
    <location>
        <position position="208"/>
    </location>
    <ligand>
        <name>Zn(2+)</name>
        <dbReference type="ChEBI" id="CHEBI:29105"/>
    </ligand>
</feature>
<feature type="binding site" evidence="1">
    <location>
        <position position="211"/>
    </location>
    <ligand>
        <name>Zn(2+)</name>
        <dbReference type="ChEBI" id="CHEBI:29105"/>
    </ligand>
</feature>
<feature type="binding site" evidence="1">
    <location>
        <position position="214"/>
    </location>
    <ligand>
        <name>Zn(2+)</name>
        <dbReference type="ChEBI" id="CHEBI:29105"/>
    </ligand>
</feature>
<comment type="function">
    <text evidence="1">Catalyzes the ATP-dependent conversion of 7-carboxy-7-deazaguanine (CDG) to 7-cyano-7-deazaguanine (preQ(0)).</text>
</comment>
<comment type="catalytic activity">
    <reaction evidence="1">
        <text>7-carboxy-7-deazaguanine + NH4(+) + ATP = 7-cyano-7-deazaguanine + ADP + phosphate + H2O + H(+)</text>
        <dbReference type="Rhea" id="RHEA:27982"/>
        <dbReference type="ChEBI" id="CHEBI:15377"/>
        <dbReference type="ChEBI" id="CHEBI:15378"/>
        <dbReference type="ChEBI" id="CHEBI:28938"/>
        <dbReference type="ChEBI" id="CHEBI:30616"/>
        <dbReference type="ChEBI" id="CHEBI:43474"/>
        <dbReference type="ChEBI" id="CHEBI:45075"/>
        <dbReference type="ChEBI" id="CHEBI:61036"/>
        <dbReference type="ChEBI" id="CHEBI:456216"/>
        <dbReference type="EC" id="6.3.4.20"/>
    </reaction>
</comment>
<comment type="cofactor">
    <cofactor evidence="1">
        <name>Zn(2+)</name>
        <dbReference type="ChEBI" id="CHEBI:29105"/>
    </cofactor>
    <text evidence="1">Binds 1 zinc ion per subunit.</text>
</comment>
<comment type="pathway">
    <text evidence="1">Purine metabolism; 7-cyano-7-deazaguanine biosynthesis.</text>
</comment>
<comment type="similarity">
    <text evidence="1">Belongs to the QueC family.</text>
</comment>
<sequence length="234" mass="24908">MAKATSEARRAVVLLSGGLDSSTCLAVARAEGLEAHCLSVDYGQRHKGELARARRIARALGAAGHRVVKVDLSAFGGSALTDAAIAVPKGRSEARMARDIPVTYVPARNTVMLSLALAHAEVIGAEQIFVGVNAIDYSGYPDCRPAFLHAFERLAKVATRAGVEGHPLRIRAPLLRLSKAGIVRLGTKLGVPYRMTLSCYDPIRGRACGRCDACSLRRKGFAEAGVQDPTQYAK</sequence>
<proteinExistence type="inferred from homology"/>
<gene>
    <name evidence="1" type="primary">queC</name>
    <name type="ordered locus">Adeh_3799</name>
</gene>
<reference key="1">
    <citation type="submission" date="2006-01" db="EMBL/GenBank/DDBJ databases">
        <title>Complete sequence of Anaeromyxobacter dehalogenans 2CP-C.</title>
        <authorList>
            <person name="Copeland A."/>
            <person name="Lucas S."/>
            <person name="Lapidus A."/>
            <person name="Barry K."/>
            <person name="Detter J.C."/>
            <person name="Glavina T."/>
            <person name="Hammon N."/>
            <person name="Israni S."/>
            <person name="Pitluck S."/>
            <person name="Brettin T."/>
            <person name="Bruce D."/>
            <person name="Han C."/>
            <person name="Tapia R."/>
            <person name="Gilna P."/>
            <person name="Kiss H."/>
            <person name="Schmutz J."/>
            <person name="Larimer F."/>
            <person name="Land M."/>
            <person name="Kyrpides N."/>
            <person name="Anderson I."/>
            <person name="Sanford R.A."/>
            <person name="Ritalahti K.M."/>
            <person name="Thomas H.S."/>
            <person name="Kirby J.R."/>
            <person name="Zhulin I.B."/>
            <person name="Loeffler F.E."/>
            <person name="Richardson P."/>
        </authorList>
    </citation>
    <scope>NUCLEOTIDE SEQUENCE [LARGE SCALE GENOMIC DNA]</scope>
    <source>
        <strain>2CP-C</strain>
    </source>
</reference>
<evidence type="ECO:0000255" key="1">
    <source>
        <dbReference type="HAMAP-Rule" id="MF_01633"/>
    </source>
</evidence>
<protein>
    <recommendedName>
        <fullName evidence="1">7-cyano-7-deazaguanine synthase</fullName>
        <ecNumber evidence="1">6.3.4.20</ecNumber>
    </recommendedName>
    <alternativeName>
        <fullName evidence="1">7-cyano-7-carbaguanine synthase</fullName>
    </alternativeName>
    <alternativeName>
        <fullName evidence="1">PreQ(0) synthase</fullName>
    </alternativeName>
    <alternativeName>
        <fullName evidence="1">Queuosine biosynthesis protein QueC</fullName>
    </alternativeName>
</protein>
<organism>
    <name type="scientific">Anaeromyxobacter dehalogenans (strain 2CP-C)</name>
    <dbReference type="NCBI Taxonomy" id="290397"/>
    <lineage>
        <taxon>Bacteria</taxon>
        <taxon>Pseudomonadati</taxon>
        <taxon>Myxococcota</taxon>
        <taxon>Myxococcia</taxon>
        <taxon>Myxococcales</taxon>
        <taxon>Cystobacterineae</taxon>
        <taxon>Anaeromyxobacteraceae</taxon>
        <taxon>Anaeromyxobacter</taxon>
    </lineage>
</organism>
<dbReference type="EC" id="6.3.4.20" evidence="1"/>
<dbReference type="EMBL" id="CP000251">
    <property type="protein sequence ID" value="ABC83565.1"/>
    <property type="molecule type" value="Genomic_DNA"/>
</dbReference>
<dbReference type="RefSeq" id="WP_011422847.1">
    <property type="nucleotide sequence ID" value="NC_007760.1"/>
</dbReference>
<dbReference type="SMR" id="Q2IG55"/>
<dbReference type="STRING" id="290397.Adeh_3799"/>
<dbReference type="KEGG" id="ade:Adeh_3799"/>
<dbReference type="eggNOG" id="COG0603">
    <property type="taxonomic scope" value="Bacteria"/>
</dbReference>
<dbReference type="HOGENOM" id="CLU_081854_1_1_7"/>
<dbReference type="OrthoDB" id="9789567at2"/>
<dbReference type="UniPathway" id="UPA00391"/>
<dbReference type="Proteomes" id="UP000001935">
    <property type="component" value="Chromosome"/>
</dbReference>
<dbReference type="GO" id="GO:0005524">
    <property type="term" value="F:ATP binding"/>
    <property type="evidence" value="ECO:0007669"/>
    <property type="project" value="UniProtKB-UniRule"/>
</dbReference>
<dbReference type="GO" id="GO:0016879">
    <property type="term" value="F:ligase activity, forming carbon-nitrogen bonds"/>
    <property type="evidence" value="ECO:0007669"/>
    <property type="project" value="UniProtKB-UniRule"/>
</dbReference>
<dbReference type="GO" id="GO:0008270">
    <property type="term" value="F:zinc ion binding"/>
    <property type="evidence" value="ECO:0007669"/>
    <property type="project" value="UniProtKB-UniRule"/>
</dbReference>
<dbReference type="GO" id="GO:0008616">
    <property type="term" value="P:queuosine biosynthetic process"/>
    <property type="evidence" value="ECO:0007669"/>
    <property type="project" value="UniProtKB-UniRule"/>
</dbReference>
<dbReference type="CDD" id="cd01995">
    <property type="entry name" value="QueC-like"/>
    <property type="match status" value="1"/>
</dbReference>
<dbReference type="Gene3D" id="3.40.50.620">
    <property type="entry name" value="HUPs"/>
    <property type="match status" value="1"/>
</dbReference>
<dbReference type="HAMAP" id="MF_01633">
    <property type="entry name" value="QueC"/>
    <property type="match status" value="1"/>
</dbReference>
<dbReference type="InterPro" id="IPR018317">
    <property type="entry name" value="QueC"/>
</dbReference>
<dbReference type="InterPro" id="IPR014729">
    <property type="entry name" value="Rossmann-like_a/b/a_fold"/>
</dbReference>
<dbReference type="NCBIfam" id="TIGR00364">
    <property type="entry name" value="7-cyano-7-deazaguanine synthase QueC"/>
    <property type="match status" value="1"/>
</dbReference>
<dbReference type="PANTHER" id="PTHR42914">
    <property type="entry name" value="7-CYANO-7-DEAZAGUANINE SYNTHASE"/>
    <property type="match status" value="1"/>
</dbReference>
<dbReference type="PANTHER" id="PTHR42914:SF1">
    <property type="entry name" value="7-CYANO-7-DEAZAGUANINE SYNTHASE"/>
    <property type="match status" value="1"/>
</dbReference>
<dbReference type="Pfam" id="PF06508">
    <property type="entry name" value="QueC"/>
    <property type="match status" value="1"/>
</dbReference>
<dbReference type="PIRSF" id="PIRSF006293">
    <property type="entry name" value="ExsB"/>
    <property type="match status" value="1"/>
</dbReference>
<dbReference type="SUPFAM" id="SSF52402">
    <property type="entry name" value="Adenine nucleotide alpha hydrolases-like"/>
    <property type="match status" value="1"/>
</dbReference>